<comment type="function">
    <text evidence="1">Plant non-specific lipid-transfer proteins transfer phospholipids as well as galactolipids across membranes. May play a role in wax or cutin deposition in the cell walls of expanding epidermal cells and certain secretory tissues (By similarity).</text>
</comment>
<comment type="similarity">
    <text evidence="3">Belongs to the plant LTP family.</text>
</comment>
<comment type="sequence caution" evidence="3">
    <conflict type="erroneous gene model prediction">
        <sequence resource="EMBL-CDS" id="BAB09777"/>
    </conflict>
</comment>
<proteinExistence type="inferred from homology"/>
<reference key="1">
    <citation type="journal article" date="2000" name="Plant Sci.">
        <title>Lipid transfer proteins are encoded by a small multigene family in Arabidopsis thaliana.</title>
        <authorList>
            <person name="Arondel V.A."/>
            <person name="Vergnolle C."/>
            <person name="Cantrel C."/>
            <person name="Kader J.-C."/>
        </authorList>
    </citation>
    <scope>NUCLEOTIDE SEQUENCE [MRNA]</scope>
    <source>
        <strain>cv. Columbia</strain>
    </source>
</reference>
<reference key="2">
    <citation type="submission" date="1998-08" db="EMBL/GenBank/DDBJ databases">
        <title>Signal peptide selection derived cDNAs from Arabidopsis thaliana leaves and guard cells.</title>
        <authorList>
            <person name="Stracke R."/>
            <person name="Palme K."/>
        </authorList>
    </citation>
    <scope>NUCLEOTIDE SEQUENCE [LARGE SCALE MRNA]</scope>
</reference>
<reference key="3">
    <citation type="journal article" date="1998" name="DNA Res.">
        <title>Structural analysis of Arabidopsis thaliana chromosome 5. VIII. Sequence features of the regions of 1,081,958 bp covered by seventeen physically assigned P1 and TAC clones.</title>
        <authorList>
            <person name="Asamizu E."/>
            <person name="Sato S."/>
            <person name="Kaneko T."/>
            <person name="Nakamura Y."/>
            <person name="Kotani H."/>
            <person name="Miyajima N."/>
            <person name="Tabata S."/>
        </authorList>
    </citation>
    <scope>NUCLEOTIDE SEQUENCE [LARGE SCALE GENOMIC DNA]</scope>
    <source>
        <strain>cv. Columbia</strain>
    </source>
</reference>
<reference key="4">
    <citation type="journal article" date="2017" name="Plant J.">
        <title>Araport11: a complete reannotation of the Arabidopsis thaliana reference genome.</title>
        <authorList>
            <person name="Cheng C.Y."/>
            <person name="Krishnakumar V."/>
            <person name="Chan A.P."/>
            <person name="Thibaud-Nissen F."/>
            <person name="Schobel S."/>
            <person name="Town C.D."/>
        </authorList>
    </citation>
    <scope>GENOME REANNOTATION</scope>
    <source>
        <strain>cv. Columbia</strain>
    </source>
</reference>
<reference key="5">
    <citation type="journal article" date="2003" name="Science">
        <title>Empirical analysis of transcriptional activity in the Arabidopsis genome.</title>
        <authorList>
            <person name="Yamada K."/>
            <person name="Lim J."/>
            <person name="Dale J.M."/>
            <person name="Chen H."/>
            <person name="Shinn P."/>
            <person name="Palm C.J."/>
            <person name="Southwick A.M."/>
            <person name="Wu H.C."/>
            <person name="Kim C.J."/>
            <person name="Nguyen M."/>
            <person name="Pham P.K."/>
            <person name="Cheuk R.F."/>
            <person name="Karlin-Newmann G."/>
            <person name="Liu S.X."/>
            <person name="Lam B."/>
            <person name="Sakano H."/>
            <person name="Wu T."/>
            <person name="Yu G."/>
            <person name="Miranda M."/>
            <person name="Quach H.L."/>
            <person name="Tripp M."/>
            <person name="Chang C.H."/>
            <person name="Lee J.M."/>
            <person name="Toriumi M.J."/>
            <person name="Chan M.M."/>
            <person name="Tang C.C."/>
            <person name="Onodera C.S."/>
            <person name="Deng J.M."/>
            <person name="Akiyama K."/>
            <person name="Ansari Y."/>
            <person name="Arakawa T."/>
            <person name="Banh J."/>
            <person name="Banno F."/>
            <person name="Bowser L."/>
            <person name="Brooks S.Y."/>
            <person name="Carninci P."/>
            <person name="Chao Q."/>
            <person name="Choy N."/>
            <person name="Enju A."/>
            <person name="Goldsmith A.D."/>
            <person name="Gurjal M."/>
            <person name="Hansen N.F."/>
            <person name="Hayashizaki Y."/>
            <person name="Johnson-Hopson C."/>
            <person name="Hsuan V.W."/>
            <person name="Iida K."/>
            <person name="Karnes M."/>
            <person name="Khan S."/>
            <person name="Koesema E."/>
            <person name="Ishida J."/>
            <person name="Jiang P.X."/>
            <person name="Jones T."/>
            <person name="Kawai J."/>
            <person name="Kamiya A."/>
            <person name="Meyers C."/>
            <person name="Nakajima M."/>
            <person name="Narusaka M."/>
            <person name="Seki M."/>
            <person name="Sakurai T."/>
            <person name="Satou M."/>
            <person name="Tamse R."/>
            <person name="Vaysberg M."/>
            <person name="Wallender E.K."/>
            <person name="Wong C."/>
            <person name="Yamamura Y."/>
            <person name="Yuan S."/>
            <person name="Shinozaki K."/>
            <person name="Davis R.W."/>
            <person name="Theologis A."/>
            <person name="Ecker J.R."/>
        </authorList>
    </citation>
    <scope>NUCLEOTIDE SEQUENCE [LARGE SCALE MRNA]</scope>
    <source>
        <strain>cv. Columbia</strain>
    </source>
</reference>
<reference key="6">
    <citation type="submission" date="2002-03" db="EMBL/GenBank/DDBJ databases">
        <title>Full-length cDNA from Arabidopsis thaliana.</title>
        <authorList>
            <person name="Brover V.V."/>
            <person name="Troukhan M.E."/>
            <person name="Alexandrov N.A."/>
            <person name="Lu Y.-P."/>
            <person name="Flavell R.B."/>
            <person name="Feldmann K.A."/>
        </authorList>
    </citation>
    <scope>NUCLEOTIDE SEQUENCE [LARGE SCALE MRNA]</scope>
</reference>
<reference key="7">
    <citation type="journal article" date="2008" name="Plant Physiol. Biochem.">
        <title>Plant pathogenesis-related (PR) proteins: a focus on PR peptides.</title>
        <authorList>
            <person name="Sels J."/>
            <person name="Mathys J."/>
            <person name="De Coninck B.M.A."/>
            <person name="Cammue B.P.A."/>
            <person name="De Bolle M.F.C."/>
        </authorList>
    </citation>
    <scope>GENE FAMILY</scope>
    <scope>NOMENCLATURE</scope>
</reference>
<feature type="signal peptide" evidence="2">
    <location>
        <begin position="1"/>
        <end position="23"/>
    </location>
</feature>
<feature type="chain" id="PRO_0000018363" description="Non-specific lipid-transfer protein 3">
    <location>
        <begin position="24"/>
        <end position="115"/>
    </location>
</feature>
<feature type="disulfide bond" evidence="2">
    <location>
        <begin position="27"/>
        <end position="74"/>
    </location>
</feature>
<feature type="disulfide bond" evidence="2">
    <location>
        <begin position="37"/>
        <end position="51"/>
    </location>
</feature>
<feature type="disulfide bond" evidence="2">
    <location>
        <begin position="52"/>
        <end position="97"/>
    </location>
</feature>
<feature type="disulfide bond" evidence="2">
    <location>
        <begin position="72"/>
        <end position="111"/>
    </location>
</feature>
<protein>
    <recommendedName>
        <fullName>Non-specific lipid-transfer protein 3</fullName>
        <shortName>LTP 3</shortName>
    </recommendedName>
</protein>
<gene>
    <name type="primary">LTP3</name>
    <name type="ordered locus">At5g59320</name>
    <name type="ORF">MNC17.23</name>
</gene>
<name>NLTP3_ARATH</name>
<evidence type="ECO:0000250" key="1"/>
<evidence type="ECO:0000255" key="2"/>
<evidence type="ECO:0000305" key="3"/>
<sequence length="115" mass="11694">MAFALRFFTCLVLTVCIVASVDAAISCGTVAGSLAPCATYLSKGGLVPPSCCAGVKTLNSMAKTTPDRQQACRCIQSTAKSISGLNPSLASGLPGKCGVSIPYPISMSTNCNNIK</sequence>
<organism>
    <name type="scientific">Arabidopsis thaliana</name>
    <name type="common">Mouse-ear cress</name>
    <dbReference type="NCBI Taxonomy" id="3702"/>
    <lineage>
        <taxon>Eukaryota</taxon>
        <taxon>Viridiplantae</taxon>
        <taxon>Streptophyta</taxon>
        <taxon>Embryophyta</taxon>
        <taxon>Tracheophyta</taxon>
        <taxon>Spermatophyta</taxon>
        <taxon>Magnoliopsida</taxon>
        <taxon>eudicotyledons</taxon>
        <taxon>Gunneridae</taxon>
        <taxon>Pentapetalae</taxon>
        <taxon>rosids</taxon>
        <taxon>malvids</taxon>
        <taxon>Brassicales</taxon>
        <taxon>Brassicaceae</taxon>
        <taxon>Camelineae</taxon>
        <taxon>Arabidopsis</taxon>
    </lineage>
</organism>
<keyword id="KW-1015">Disulfide bond</keyword>
<keyword id="KW-0446">Lipid-binding</keyword>
<keyword id="KW-1185">Reference proteome</keyword>
<keyword id="KW-0732">Signal</keyword>
<keyword id="KW-0813">Transport</keyword>
<dbReference type="EMBL" id="AF159800">
    <property type="protein sequence ID" value="AAF76929.1"/>
    <property type="molecule type" value="mRNA"/>
</dbReference>
<dbReference type="EMBL" id="AF083697">
    <property type="protein sequence ID" value="AAN60256.1"/>
    <property type="molecule type" value="mRNA"/>
</dbReference>
<dbReference type="EMBL" id="AB016890">
    <property type="protein sequence ID" value="BAB09777.1"/>
    <property type="status" value="ALT_SEQ"/>
    <property type="molecule type" value="Genomic_DNA"/>
</dbReference>
<dbReference type="EMBL" id="CP002688">
    <property type="protein sequence ID" value="AED97171.1"/>
    <property type="molecule type" value="Genomic_DNA"/>
</dbReference>
<dbReference type="EMBL" id="AY065293">
    <property type="protein sequence ID" value="AAL38769.1"/>
    <property type="molecule type" value="mRNA"/>
</dbReference>
<dbReference type="EMBL" id="AY094428">
    <property type="protein sequence ID" value="AAM19801.1"/>
    <property type="molecule type" value="mRNA"/>
</dbReference>
<dbReference type="EMBL" id="AY096572">
    <property type="protein sequence ID" value="AAM20222.1"/>
    <property type="molecule type" value="mRNA"/>
</dbReference>
<dbReference type="EMBL" id="AY088556">
    <property type="protein sequence ID" value="AAM66088.1"/>
    <property type="molecule type" value="mRNA"/>
</dbReference>
<dbReference type="RefSeq" id="NP_568905.1">
    <property type="nucleotide sequence ID" value="NM_125323.5"/>
</dbReference>
<dbReference type="SMR" id="Q9LLR7"/>
<dbReference type="BioGRID" id="21295">
    <property type="interactions" value="2"/>
</dbReference>
<dbReference type="FunCoup" id="Q9LLR7">
    <property type="interactions" value="45"/>
</dbReference>
<dbReference type="STRING" id="3702.Q9LLR7"/>
<dbReference type="PaxDb" id="3702-AT5G59320.1"/>
<dbReference type="ProteomicsDB" id="249120"/>
<dbReference type="EnsemblPlants" id="AT5G59320.1">
    <property type="protein sequence ID" value="AT5G59320.1"/>
    <property type="gene ID" value="AT5G59320"/>
</dbReference>
<dbReference type="GeneID" id="836051"/>
<dbReference type="Gramene" id="AT5G59320.1">
    <property type="protein sequence ID" value="AT5G59320.1"/>
    <property type="gene ID" value="AT5G59320"/>
</dbReference>
<dbReference type="KEGG" id="ath:AT5G59320"/>
<dbReference type="Araport" id="AT5G59320"/>
<dbReference type="TAIR" id="AT5G59320">
    <property type="gene designation" value="LTP3"/>
</dbReference>
<dbReference type="eggNOG" id="ENOG502SAKZ">
    <property type="taxonomic scope" value="Eukaryota"/>
</dbReference>
<dbReference type="HOGENOM" id="CLU_128423_0_0_1"/>
<dbReference type="InParanoid" id="Q9LLR7"/>
<dbReference type="OMA" id="MHAFICA"/>
<dbReference type="OrthoDB" id="1890443at2759"/>
<dbReference type="PhylomeDB" id="Q9LLR7"/>
<dbReference type="PRO" id="PR:Q9LLR7"/>
<dbReference type="Proteomes" id="UP000006548">
    <property type="component" value="Chromosome 5"/>
</dbReference>
<dbReference type="ExpressionAtlas" id="Q9LLR7">
    <property type="expression patterns" value="baseline and differential"/>
</dbReference>
<dbReference type="GO" id="GO:0048046">
    <property type="term" value="C:apoplast"/>
    <property type="evidence" value="ECO:0007005"/>
    <property type="project" value="TAIR"/>
</dbReference>
<dbReference type="GO" id="GO:0008289">
    <property type="term" value="F:lipid binding"/>
    <property type="evidence" value="ECO:0007669"/>
    <property type="project" value="UniProtKB-KW"/>
</dbReference>
<dbReference type="GO" id="GO:0006869">
    <property type="term" value="P:lipid transport"/>
    <property type="evidence" value="ECO:0007669"/>
    <property type="project" value="InterPro"/>
</dbReference>
<dbReference type="GO" id="GO:0009737">
    <property type="term" value="P:response to abscisic acid"/>
    <property type="evidence" value="ECO:0000270"/>
    <property type="project" value="TAIR"/>
</dbReference>
<dbReference type="GO" id="GO:0009414">
    <property type="term" value="P:response to water deprivation"/>
    <property type="evidence" value="ECO:0000270"/>
    <property type="project" value="TAIR"/>
</dbReference>
<dbReference type="CDD" id="cd01960">
    <property type="entry name" value="nsLTP1"/>
    <property type="match status" value="1"/>
</dbReference>
<dbReference type="FunFam" id="1.10.110.10:FF:000002">
    <property type="entry name" value="Non-specific lipid-transfer protein"/>
    <property type="match status" value="1"/>
</dbReference>
<dbReference type="Gene3D" id="1.10.110.10">
    <property type="entry name" value="Plant lipid-transfer and hydrophobic proteins"/>
    <property type="match status" value="1"/>
</dbReference>
<dbReference type="InterPro" id="IPR036312">
    <property type="entry name" value="Bifun_inhib/LTP/seed_sf"/>
</dbReference>
<dbReference type="InterPro" id="IPR016140">
    <property type="entry name" value="Bifunc_inhib/LTP/seed_store"/>
</dbReference>
<dbReference type="InterPro" id="IPR000528">
    <property type="entry name" value="Plant_nsLTP"/>
</dbReference>
<dbReference type="PANTHER" id="PTHR33076">
    <property type="entry name" value="NON-SPECIFIC LIPID-TRANSFER PROTEIN 2-RELATED"/>
    <property type="match status" value="1"/>
</dbReference>
<dbReference type="Pfam" id="PF00234">
    <property type="entry name" value="Tryp_alpha_amyl"/>
    <property type="match status" value="1"/>
</dbReference>
<dbReference type="PRINTS" id="PR00382">
    <property type="entry name" value="LIPIDTRNSFER"/>
</dbReference>
<dbReference type="SMART" id="SM00499">
    <property type="entry name" value="AAI"/>
    <property type="match status" value="1"/>
</dbReference>
<dbReference type="SUPFAM" id="SSF47699">
    <property type="entry name" value="Bifunctional inhibitor/lipid-transfer protein/seed storage 2S albumin"/>
    <property type="match status" value="1"/>
</dbReference>
<dbReference type="PROSITE" id="PS00597">
    <property type="entry name" value="PLANT_LTP"/>
    <property type="match status" value="1"/>
</dbReference>
<accession>Q9LLR7</accession>
<accession>Q8L9A3</accession>
<accession>Q9FIE6</accession>